<comment type="function">
    <text evidence="1">Major role in the synthesis of nucleoside triphosphates other than ATP. The ATP gamma phosphate is transferred to the NDP beta phosphate via a ping-pong mechanism, using a phosphorylated active-site intermediate.</text>
</comment>
<comment type="catalytic activity">
    <reaction evidence="1">
        <text>a 2'-deoxyribonucleoside 5'-diphosphate + ATP = a 2'-deoxyribonucleoside 5'-triphosphate + ADP</text>
        <dbReference type="Rhea" id="RHEA:44640"/>
        <dbReference type="ChEBI" id="CHEBI:30616"/>
        <dbReference type="ChEBI" id="CHEBI:61560"/>
        <dbReference type="ChEBI" id="CHEBI:73316"/>
        <dbReference type="ChEBI" id="CHEBI:456216"/>
        <dbReference type="EC" id="2.7.4.6"/>
    </reaction>
</comment>
<comment type="catalytic activity">
    <reaction evidence="1">
        <text>a ribonucleoside 5'-diphosphate + ATP = a ribonucleoside 5'-triphosphate + ADP</text>
        <dbReference type="Rhea" id="RHEA:18113"/>
        <dbReference type="ChEBI" id="CHEBI:30616"/>
        <dbReference type="ChEBI" id="CHEBI:57930"/>
        <dbReference type="ChEBI" id="CHEBI:61557"/>
        <dbReference type="ChEBI" id="CHEBI:456216"/>
        <dbReference type="EC" id="2.7.4.6"/>
    </reaction>
</comment>
<comment type="cofactor">
    <cofactor evidence="1">
        <name>Mg(2+)</name>
        <dbReference type="ChEBI" id="CHEBI:18420"/>
    </cofactor>
</comment>
<comment type="subunit">
    <text evidence="1">Homotetramer.</text>
</comment>
<comment type="subcellular location">
    <subcellularLocation>
        <location evidence="1">Cytoplasm</location>
    </subcellularLocation>
</comment>
<comment type="similarity">
    <text evidence="1">Belongs to the NDK family.</text>
</comment>
<sequence length="140" mass="15487">MAVERTFSMIKPDATRRNLTGAITKMLEDAGLRVIASKRVWMSQREAEKFYAVHKERAFFSELVELMSSGPTIVQVLEGENAIAKNREVMGATNPEDAQEGTIRKVHALSIGENSVHGSDSAETAKTEIAFWFSEVEIVG</sequence>
<evidence type="ECO:0000255" key="1">
    <source>
        <dbReference type="HAMAP-Rule" id="MF_00451"/>
    </source>
</evidence>
<accession>Q6G426</accession>
<feature type="chain" id="PRO_0000136947" description="Nucleoside diphosphate kinase">
    <location>
        <begin position="1"/>
        <end position="140"/>
    </location>
</feature>
<feature type="active site" description="Pros-phosphohistidine intermediate" evidence="1">
    <location>
        <position position="117"/>
    </location>
</feature>
<feature type="binding site" evidence="1">
    <location>
        <position position="11"/>
    </location>
    <ligand>
        <name>ATP</name>
        <dbReference type="ChEBI" id="CHEBI:30616"/>
    </ligand>
</feature>
<feature type="binding site" evidence="1">
    <location>
        <position position="59"/>
    </location>
    <ligand>
        <name>ATP</name>
        <dbReference type="ChEBI" id="CHEBI:30616"/>
    </ligand>
</feature>
<feature type="binding site" evidence="1">
    <location>
        <position position="87"/>
    </location>
    <ligand>
        <name>ATP</name>
        <dbReference type="ChEBI" id="CHEBI:30616"/>
    </ligand>
</feature>
<feature type="binding site" evidence="1">
    <location>
        <position position="93"/>
    </location>
    <ligand>
        <name>ATP</name>
        <dbReference type="ChEBI" id="CHEBI:30616"/>
    </ligand>
</feature>
<feature type="binding site" evidence="1">
    <location>
        <position position="104"/>
    </location>
    <ligand>
        <name>ATP</name>
        <dbReference type="ChEBI" id="CHEBI:30616"/>
    </ligand>
</feature>
<feature type="binding site" evidence="1">
    <location>
        <position position="114"/>
    </location>
    <ligand>
        <name>ATP</name>
        <dbReference type="ChEBI" id="CHEBI:30616"/>
    </ligand>
</feature>
<proteinExistence type="inferred from homology"/>
<reference key="1">
    <citation type="journal article" date="2004" name="Proc. Natl. Acad. Sci. U.S.A.">
        <title>The louse-borne human pathogen Bartonella quintana is a genomic derivative of the zoonotic agent Bartonella henselae.</title>
        <authorList>
            <person name="Alsmark U.C.M."/>
            <person name="Frank A.C."/>
            <person name="Karlberg E.O."/>
            <person name="Legault B.-A."/>
            <person name="Ardell D.H."/>
            <person name="Canbaeck B."/>
            <person name="Eriksson A.-S."/>
            <person name="Naeslund A.K."/>
            <person name="Handley S.A."/>
            <person name="Huvet M."/>
            <person name="La Scola B."/>
            <person name="Holmberg M."/>
            <person name="Andersson S.G.E."/>
        </authorList>
    </citation>
    <scope>NUCLEOTIDE SEQUENCE [LARGE SCALE GENOMIC DNA]</scope>
    <source>
        <strain>ATCC 49882 / DSM 28221 / CCUG 30454 / Houston 1</strain>
    </source>
</reference>
<name>NDK_BARHE</name>
<organism>
    <name type="scientific">Bartonella henselae (strain ATCC 49882 / DSM 28221 / CCUG 30454 / Houston 1)</name>
    <name type="common">Rochalimaea henselae</name>
    <dbReference type="NCBI Taxonomy" id="283166"/>
    <lineage>
        <taxon>Bacteria</taxon>
        <taxon>Pseudomonadati</taxon>
        <taxon>Pseudomonadota</taxon>
        <taxon>Alphaproteobacteria</taxon>
        <taxon>Hyphomicrobiales</taxon>
        <taxon>Bartonellaceae</taxon>
        <taxon>Bartonella</taxon>
    </lineage>
</organism>
<keyword id="KW-0067">ATP-binding</keyword>
<keyword id="KW-0963">Cytoplasm</keyword>
<keyword id="KW-0418">Kinase</keyword>
<keyword id="KW-0460">Magnesium</keyword>
<keyword id="KW-0479">Metal-binding</keyword>
<keyword id="KW-0546">Nucleotide metabolism</keyword>
<keyword id="KW-0547">Nucleotide-binding</keyword>
<keyword id="KW-0597">Phosphoprotein</keyword>
<keyword id="KW-0808">Transferase</keyword>
<dbReference type="EC" id="2.7.4.6" evidence="1"/>
<dbReference type="EMBL" id="BX897699">
    <property type="protein sequence ID" value="CAF27361.1"/>
    <property type="molecule type" value="Genomic_DNA"/>
</dbReference>
<dbReference type="RefSeq" id="WP_011180483.1">
    <property type="nucleotide sequence ID" value="NZ_LRIJ02000001.1"/>
</dbReference>
<dbReference type="SMR" id="Q6G426"/>
<dbReference type="PaxDb" id="283166-BH05530"/>
<dbReference type="EnsemblBacteria" id="CAF27361">
    <property type="protein sequence ID" value="CAF27361"/>
    <property type="gene ID" value="BH05530"/>
</dbReference>
<dbReference type="GeneID" id="92985210"/>
<dbReference type="KEGG" id="bhe:BH05530"/>
<dbReference type="eggNOG" id="COG0105">
    <property type="taxonomic scope" value="Bacteria"/>
</dbReference>
<dbReference type="OrthoDB" id="9801161at2"/>
<dbReference type="Proteomes" id="UP000000421">
    <property type="component" value="Chromosome"/>
</dbReference>
<dbReference type="GO" id="GO:0005737">
    <property type="term" value="C:cytoplasm"/>
    <property type="evidence" value="ECO:0007669"/>
    <property type="project" value="UniProtKB-SubCell"/>
</dbReference>
<dbReference type="GO" id="GO:0005524">
    <property type="term" value="F:ATP binding"/>
    <property type="evidence" value="ECO:0007669"/>
    <property type="project" value="UniProtKB-UniRule"/>
</dbReference>
<dbReference type="GO" id="GO:0046872">
    <property type="term" value="F:metal ion binding"/>
    <property type="evidence" value="ECO:0007669"/>
    <property type="project" value="UniProtKB-KW"/>
</dbReference>
<dbReference type="GO" id="GO:0004550">
    <property type="term" value="F:nucleoside diphosphate kinase activity"/>
    <property type="evidence" value="ECO:0007669"/>
    <property type="project" value="UniProtKB-UniRule"/>
</dbReference>
<dbReference type="GO" id="GO:0006241">
    <property type="term" value="P:CTP biosynthetic process"/>
    <property type="evidence" value="ECO:0007669"/>
    <property type="project" value="UniProtKB-UniRule"/>
</dbReference>
<dbReference type="GO" id="GO:0006183">
    <property type="term" value="P:GTP biosynthetic process"/>
    <property type="evidence" value="ECO:0007669"/>
    <property type="project" value="UniProtKB-UniRule"/>
</dbReference>
<dbReference type="GO" id="GO:0006228">
    <property type="term" value="P:UTP biosynthetic process"/>
    <property type="evidence" value="ECO:0007669"/>
    <property type="project" value="UniProtKB-UniRule"/>
</dbReference>
<dbReference type="CDD" id="cd04413">
    <property type="entry name" value="NDPk_I"/>
    <property type="match status" value="1"/>
</dbReference>
<dbReference type="FunFam" id="3.30.70.141:FF:000039">
    <property type="entry name" value="Nucleoside diphosphate kinase B"/>
    <property type="match status" value="1"/>
</dbReference>
<dbReference type="Gene3D" id="3.30.70.141">
    <property type="entry name" value="Nucleoside diphosphate kinase-like domain"/>
    <property type="match status" value="1"/>
</dbReference>
<dbReference type="HAMAP" id="MF_00451">
    <property type="entry name" value="NDP_kinase"/>
    <property type="match status" value="1"/>
</dbReference>
<dbReference type="InterPro" id="IPR034907">
    <property type="entry name" value="NDK-like_dom"/>
</dbReference>
<dbReference type="InterPro" id="IPR036850">
    <property type="entry name" value="NDK-like_dom_sf"/>
</dbReference>
<dbReference type="InterPro" id="IPR001564">
    <property type="entry name" value="Nucleoside_diP_kinase"/>
</dbReference>
<dbReference type="NCBIfam" id="NF001908">
    <property type="entry name" value="PRK00668.1"/>
    <property type="match status" value="1"/>
</dbReference>
<dbReference type="PANTHER" id="PTHR46161">
    <property type="entry name" value="NUCLEOSIDE DIPHOSPHATE KINASE"/>
    <property type="match status" value="1"/>
</dbReference>
<dbReference type="PANTHER" id="PTHR46161:SF3">
    <property type="entry name" value="NUCLEOSIDE DIPHOSPHATE KINASE DDB_G0292928-RELATED"/>
    <property type="match status" value="1"/>
</dbReference>
<dbReference type="Pfam" id="PF00334">
    <property type="entry name" value="NDK"/>
    <property type="match status" value="1"/>
</dbReference>
<dbReference type="PRINTS" id="PR01243">
    <property type="entry name" value="NUCDPKINASE"/>
</dbReference>
<dbReference type="SMART" id="SM00562">
    <property type="entry name" value="NDK"/>
    <property type="match status" value="1"/>
</dbReference>
<dbReference type="SUPFAM" id="SSF54919">
    <property type="entry name" value="Nucleoside diphosphate kinase, NDK"/>
    <property type="match status" value="1"/>
</dbReference>
<dbReference type="PROSITE" id="PS51374">
    <property type="entry name" value="NDPK_LIKE"/>
    <property type="match status" value="1"/>
</dbReference>
<gene>
    <name evidence="1" type="primary">ndk</name>
    <name type="ordered locus">BH05530</name>
</gene>
<protein>
    <recommendedName>
        <fullName evidence="1">Nucleoside diphosphate kinase</fullName>
        <shortName evidence="1">NDK</shortName>
        <shortName evidence="1">NDP kinase</shortName>
        <ecNumber evidence="1">2.7.4.6</ecNumber>
    </recommendedName>
    <alternativeName>
        <fullName evidence="1">Nucleoside-2-P kinase</fullName>
    </alternativeName>
</protein>